<accession>Q9TTK7</accession>
<gene>
    <name type="primary">OLR1</name>
    <name type="synonym">LOX1</name>
</gene>
<protein>
    <recommendedName>
        <fullName>Oxidized low-density lipoprotein receptor 1</fullName>
        <shortName>Ox-LDL receptor 1</shortName>
    </recommendedName>
    <alternativeName>
        <fullName>Lectin-like oxidized LDL receptor 1</fullName>
        <shortName>LOX-1</shortName>
        <shortName>Lectin-like oxLDL receptor 1</shortName>
    </alternativeName>
    <alternativeName>
        <fullName>Lectin-type oxidized LDL receptor 1</fullName>
    </alternativeName>
    <component>
        <recommendedName>
            <fullName>Oxidized low-density lipoprotein receptor 1, soluble form</fullName>
        </recommendedName>
    </component>
</protein>
<evidence type="ECO:0000250" key="1"/>
<evidence type="ECO:0000255" key="2"/>
<evidence type="ECO:0000255" key="3">
    <source>
        <dbReference type="PROSITE-ProRule" id="PRU00040"/>
    </source>
</evidence>
<evidence type="ECO:0000256" key="4">
    <source>
        <dbReference type="SAM" id="MobiDB-lite"/>
    </source>
</evidence>
<reference key="1">
    <citation type="journal article" date="2001" name="Biochem. J.">
        <title>Conserved C-terminal residues within the lectin-like domain of LOX-1 are essential for oxidized low-density-lipoprotein binding.</title>
        <authorList>
            <person name="Chen M."/>
            <person name="Narumiya S."/>
            <person name="Masaki T."/>
            <person name="Sawamura T."/>
        </authorList>
    </citation>
    <scope>NUCLEOTIDE SEQUENCE [MRNA]</scope>
</reference>
<comment type="function">
    <text evidence="1">Receptor that mediates the recognition, internalization and degradation of oxidatively modified low density lipoprotein (oxLDL) by vascular endothelial cells. OxLDL is a marker of atherosclerosis that induces vascular endothelial cell activation and dysfunction, resulting in pro-inflammatory responses, pro-oxidative conditions and apoptosis. Its association with oxLDL induces the activation of NF-kappa-B through an increased production of intracellular reactive oxygen and a variety of pro-atherogenic cellular responses including a reduction of nitric oxide (NO) release, monocyte adhesion and apoptosis. In addition to binding oxLDL, it acts as a receptor for the HSP70 protein involved in antigen cross-presentation to naive T-cells in dendritic cells, thereby participating in cell-mediated antigen cross-presentation. Also involved in inflammatory process, by acting as a leukocyte-adhesion molecule at the vascular interface in endotoxin-induced inflammation. Also acts as a receptor for advanced glycation end (AGE) products, activated platelets, monocytes, apoptotic cells and both Gram-negative and Gram-positive bacteria (By similarity).</text>
</comment>
<comment type="subunit">
    <text evidence="1">Homodimer; disulfide-linked. May form a hexamer composed of 3 homodimers. Interacts with HSP70 (By similarity).</text>
</comment>
<comment type="subcellular location">
    <subcellularLocation>
        <location evidence="1">Cell membrane</location>
        <topology evidence="1">Lipid-anchor</topology>
    </subcellularLocation>
    <subcellularLocation>
        <location evidence="1">Cell membrane</location>
        <topology evidence="1">Single-pass type II membrane protein</topology>
    </subcellularLocation>
    <subcellularLocation>
        <location evidence="1">Membrane raft</location>
    </subcellularLocation>
    <subcellularLocation>
        <location evidence="1">Secreted</location>
    </subcellularLocation>
    <text evidence="1">A secreted form also exists. Localization to membrane rafts requires palmitoylation (By similarity).</text>
</comment>
<comment type="domain">
    <text evidence="1">The cytoplasmic region is required for subcellular sorting on the cell surface.</text>
</comment>
<comment type="domain">
    <text evidence="1">The C-type lectin domain mediates the recognition and binding of oxLDL.</text>
</comment>
<comment type="PTM">
    <text evidence="1">N-glycosylated.</text>
</comment>
<feature type="chain" id="PRO_0000017447" description="Oxidized low-density lipoprotein receptor 1">
    <location>
        <begin position="1"/>
        <end position="274"/>
    </location>
</feature>
<feature type="chain" id="PRO_0000017448" description="Oxidized low-density lipoprotein receptor 1, soluble form">
    <location>
        <begin status="unknown"/>
        <end position="274"/>
    </location>
</feature>
<feature type="topological domain" description="Cytoplasmic" evidence="2">
    <location>
        <begin position="1"/>
        <end position="37"/>
    </location>
</feature>
<feature type="transmembrane region" description="Helical; Signal-anchor for type II membrane protein" evidence="2">
    <location>
        <begin position="38"/>
        <end position="60"/>
    </location>
</feature>
<feature type="topological domain" description="Extracellular" evidence="2">
    <location>
        <begin position="61"/>
        <end position="274"/>
    </location>
</feature>
<feature type="domain" description="C-type lectin" evidence="3">
    <location>
        <begin position="151"/>
        <end position="265"/>
    </location>
</feature>
<feature type="region of interest" description="Disordered" evidence="4">
    <location>
        <begin position="1"/>
        <end position="28"/>
    </location>
</feature>
<feature type="region of interest" description="Neck">
    <location>
        <begin position="61"/>
        <end position="150"/>
    </location>
</feature>
<feature type="coiled-coil region" evidence="2">
    <location>
        <begin position="89"/>
        <end position="142"/>
    </location>
</feature>
<feature type="compositionally biased region" description="Basic and acidic residues" evidence="4">
    <location>
        <begin position="13"/>
        <end position="26"/>
    </location>
</feature>
<feature type="lipid moiety-binding region" description="S-palmitoyl cysteine" evidence="1">
    <location>
        <position position="46"/>
    </location>
</feature>
<feature type="glycosylation site" description="N-linked (GlcNAc...) asparagine" evidence="2">
    <location>
        <position position="139"/>
    </location>
</feature>
<feature type="disulfide bond" evidence="3">
    <location>
        <begin position="144"/>
        <end position="155"/>
    </location>
</feature>
<feature type="disulfide bond" evidence="3">
    <location>
        <begin position="172"/>
        <end position="264"/>
    </location>
</feature>
<feature type="disulfide bond" evidence="3">
    <location>
        <begin position="243"/>
        <end position="256"/>
    </location>
</feature>
<proteinExistence type="evidence at transcript level"/>
<keyword id="KW-0130">Cell adhesion</keyword>
<keyword id="KW-1003">Cell membrane</keyword>
<keyword id="KW-0175">Coiled coil</keyword>
<keyword id="KW-1015">Disulfide bond</keyword>
<keyword id="KW-0325">Glycoprotein</keyword>
<keyword id="KW-0391">Immunity</keyword>
<keyword id="KW-0395">Inflammatory response</keyword>
<keyword id="KW-0430">Lectin</keyword>
<keyword id="KW-0449">Lipoprotein</keyword>
<keyword id="KW-0472">Membrane</keyword>
<keyword id="KW-0564">Palmitate</keyword>
<keyword id="KW-0675">Receptor</keyword>
<keyword id="KW-1185">Reference proteome</keyword>
<keyword id="KW-0964">Secreted</keyword>
<keyword id="KW-0735">Signal-anchor</keyword>
<keyword id="KW-0812">Transmembrane</keyword>
<keyword id="KW-1133">Transmembrane helix</keyword>
<dbReference type="EMBL" id="AB018668">
    <property type="protein sequence ID" value="BAA88894.1"/>
    <property type="molecule type" value="mRNA"/>
</dbReference>
<dbReference type="RefSeq" id="NP_998970.1">
    <property type="nucleotide sequence ID" value="NM_213805.2"/>
</dbReference>
<dbReference type="SMR" id="Q9TTK7"/>
<dbReference type="FunCoup" id="Q9TTK7">
    <property type="interactions" value="229"/>
</dbReference>
<dbReference type="STRING" id="9823.ENSSSCP00000000683"/>
<dbReference type="GlyCosmos" id="Q9TTK7">
    <property type="glycosylation" value="1 site, No reported glycans"/>
</dbReference>
<dbReference type="GlyGen" id="Q9TTK7">
    <property type="glycosylation" value="1 site"/>
</dbReference>
<dbReference type="PaxDb" id="9823-ENSSSCP00000000683"/>
<dbReference type="Ensembl" id="ENSSSCT00030092381.1">
    <property type="protein sequence ID" value="ENSSSCP00030042506.1"/>
    <property type="gene ID" value="ENSSSCG00030066071.1"/>
</dbReference>
<dbReference type="Ensembl" id="ENSSSCT00045051623.1">
    <property type="protein sequence ID" value="ENSSSCP00045035909.1"/>
    <property type="gene ID" value="ENSSSCG00045030240.1"/>
</dbReference>
<dbReference type="Ensembl" id="ENSSSCT00060005911.1">
    <property type="protein sequence ID" value="ENSSSCP00060002006.1"/>
    <property type="gene ID" value="ENSSSCG00060004754.1"/>
</dbReference>
<dbReference type="Ensembl" id="ENSSSCT00065093185.1">
    <property type="protein sequence ID" value="ENSSSCP00065040781.1"/>
    <property type="gene ID" value="ENSSSCG00065067860.1"/>
</dbReference>
<dbReference type="Ensembl" id="ENSSSCT00115022662">
    <property type="protein sequence ID" value="ENSSSCP00115021479"/>
    <property type="gene ID" value="ENSSSCG00115013089"/>
</dbReference>
<dbReference type="GeneID" id="396724"/>
<dbReference type="KEGG" id="ssc:396724"/>
<dbReference type="CTD" id="4973"/>
<dbReference type="eggNOG" id="KOG4297">
    <property type="taxonomic scope" value="Eukaryota"/>
</dbReference>
<dbReference type="InParanoid" id="Q9TTK7"/>
<dbReference type="OrthoDB" id="6133475at2759"/>
<dbReference type="Reactome" id="R-SSC-202733">
    <property type="pathway name" value="Cell surface interactions at the vascular wall"/>
</dbReference>
<dbReference type="Reactome" id="R-SSC-6798695">
    <property type="pathway name" value="Neutrophil degranulation"/>
</dbReference>
<dbReference type="Proteomes" id="UP000008227">
    <property type="component" value="Unplaced"/>
</dbReference>
<dbReference type="Proteomes" id="UP000314985">
    <property type="component" value="Unplaced"/>
</dbReference>
<dbReference type="Proteomes" id="UP000694570">
    <property type="component" value="Unplaced"/>
</dbReference>
<dbReference type="Proteomes" id="UP000694571">
    <property type="component" value="Unplaced"/>
</dbReference>
<dbReference type="Proteomes" id="UP000694720">
    <property type="component" value="Unplaced"/>
</dbReference>
<dbReference type="Proteomes" id="UP000694722">
    <property type="component" value="Unplaced"/>
</dbReference>
<dbReference type="Proteomes" id="UP000694723">
    <property type="component" value="Unplaced"/>
</dbReference>
<dbReference type="Proteomes" id="UP000694724">
    <property type="component" value="Unplaced"/>
</dbReference>
<dbReference type="Proteomes" id="UP000694725">
    <property type="component" value="Unplaced"/>
</dbReference>
<dbReference type="Proteomes" id="UP000694726">
    <property type="component" value="Unplaced"/>
</dbReference>
<dbReference type="Proteomes" id="UP000694727">
    <property type="component" value="Unplaced"/>
</dbReference>
<dbReference type="Proteomes" id="UP000694728">
    <property type="component" value="Unplaced"/>
</dbReference>
<dbReference type="GO" id="GO:0005576">
    <property type="term" value="C:extracellular region"/>
    <property type="evidence" value="ECO:0007669"/>
    <property type="project" value="UniProtKB-SubCell"/>
</dbReference>
<dbReference type="GO" id="GO:0045121">
    <property type="term" value="C:membrane raft"/>
    <property type="evidence" value="ECO:0007669"/>
    <property type="project" value="UniProtKB-SubCell"/>
</dbReference>
<dbReference type="GO" id="GO:0005886">
    <property type="term" value="C:plasma membrane"/>
    <property type="evidence" value="ECO:0000318"/>
    <property type="project" value="GO_Central"/>
</dbReference>
<dbReference type="GO" id="GO:0043235">
    <property type="term" value="C:receptor complex"/>
    <property type="evidence" value="ECO:0000318"/>
    <property type="project" value="GO_Central"/>
</dbReference>
<dbReference type="GO" id="GO:0030246">
    <property type="term" value="F:carbohydrate binding"/>
    <property type="evidence" value="ECO:0007669"/>
    <property type="project" value="UniProtKB-KW"/>
</dbReference>
<dbReference type="GO" id="GO:0005041">
    <property type="term" value="F:low-density lipoprotein particle receptor activity"/>
    <property type="evidence" value="ECO:0000318"/>
    <property type="project" value="GO_Central"/>
</dbReference>
<dbReference type="GO" id="GO:0002376">
    <property type="term" value="P:immune system process"/>
    <property type="evidence" value="ECO:0007669"/>
    <property type="project" value="UniProtKB-KW"/>
</dbReference>
<dbReference type="GO" id="GO:0006954">
    <property type="term" value="P:inflammatory response"/>
    <property type="evidence" value="ECO:0007669"/>
    <property type="project" value="UniProtKB-KW"/>
</dbReference>
<dbReference type="GO" id="GO:0007159">
    <property type="term" value="P:leukocyte cell-cell adhesion"/>
    <property type="evidence" value="ECO:0000318"/>
    <property type="project" value="GO_Central"/>
</dbReference>
<dbReference type="GO" id="GO:0042157">
    <property type="term" value="P:lipoprotein metabolic process"/>
    <property type="evidence" value="ECO:0000318"/>
    <property type="project" value="GO_Central"/>
</dbReference>
<dbReference type="GO" id="GO:0032930">
    <property type="term" value="P:positive regulation of superoxide anion generation"/>
    <property type="evidence" value="ECO:0000315"/>
    <property type="project" value="AgBase"/>
</dbReference>
<dbReference type="GO" id="GO:0042310">
    <property type="term" value="P:vasoconstriction"/>
    <property type="evidence" value="ECO:0000315"/>
    <property type="project" value="GO_Central"/>
</dbReference>
<dbReference type="CDD" id="cd03593">
    <property type="entry name" value="CLECT_NK_receptors_like"/>
    <property type="match status" value="1"/>
</dbReference>
<dbReference type="FunFam" id="3.10.100.10:FF:000079">
    <property type="entry name" value="Oxidized low-density lipoprotein receptor 1"/>
    <property type="match status" value="1"/>
</dbReference>
<dbReference type="Gene3D" id="3.10.100.10">
    <property type="entry name" value="Mannose-Binding Protein A, subunit A"/>
    <property type="match status" value="1"/>
</dbReference>
<dbReference type="InterPro" id="IPR001304">
    <property type="entry name" value="C-type_lectin-like"/>
</dbReference>
<dbReference type="InterPro" id="IPR016186">
    <property type="entry name" value="C-type_lectin-like/link_sf"/>
</dbReference>
<dbReference type="InterPro" id="IPR016187">
    <property type="entry name" value="CTDL_fold"/>
</dbReference>
<dbReference type="InterPro" id="IPR033992">
    <property type="entry name" value="NKR-like_CTLD"/>
</dbReference>
<dbReference type="InterPro" id="IPR052332">
    <property type="entry name" value="OxLDL_rcpt1-like"/>
</dbReference>
<dbReference type="PANTHER" id="PTHR47298">
    <property type="entry name" value="OXIDIZED LOW-DENSITY LIPOPROTEIN RECEPTOR 1"/>
    <property type="match status" value="1"/>
</dbReference>
<dbReference type="PANTHER" id="PTHR47298:SF1">
    <property type="entry name" value="OXIDIZED LOW-DENSITY LIPOPROTEIN RECEPTOR 1"/>
    <property type="match status" value="1"/>
</dbReference>
<dbReference type="Pfam" id="PF00059">
    <property type="entry name" value="Lectin_C"/>
    <property type="match status" value="1"/>
</dbReference>
<dbReference type="SMART" id="SM00034">
    <property type="entry name" value="CLECT"/>
    <property type="match status" value="1"/>
</dbReference>
<dbReference type="SUPFAM" id="SSF56436">
    <property type="entry name" value="C-type lectin-like"/>
    <property type="match status" value="1"/>
</dbReference>
<dbReference type="PROSITE" id="PS50041">
    <property type="entry name" value="C_TYPE_LECTIN_2"/>
    <property type="match status" value="1"/>
</dbReference>
<sequence>MTLDDLKSNSMKDQPDEKSNGDKAEGPRSLSTLRWRPAALILGLLCLGLLVTVILLIIQLSQVSDLLKQQKVKLTHQEDILEGQALAQRQAEKSSQESQRELTEMIETLAHKLDEKSKKLMELQQQNLNLQKALEKAANFSGPCPQDWLWHEENCYKFSSGPFSWEKSRENCLSLDAQLLKINSTDDLEFIQQTIAHSSFPFWMGLSLRKPNNSWLWEDGTPLMPHLFRLQGAASQMYPSGTCAYIHRGIVFAENCILNAFSICQKRANLLRAQ</sequence>
<organism>
    <name type="scientific">Sus scrofa</name>
    <name type="common">Pig</name>
    <dbReference type="NCBI Taxonomy" id="9823"/>
    <lineage>
        <taxon>Eukaryota</taxon>
        <taxon>Metazoa</taxon>
        <taxon>Chordata</taxon>
        <taxon>Craniata</taxon>
        <taxon>Vertebrata</taxon>
        <taxon>Euteleostomi</taxon>
        <taxon>Mammalia</taxon>
        <taxon>Eutheria</taxon>
        <taxon>Laurasiatheria</taxon>
        <taxon>Artiodactyla</taxon>
        <taxon>Suina</taxon>
        <taxon>Suidae</taxon>
        <taxon>Sus</taxon>
    </lineage>
</organism>
<name>OLR1_PIG</name>